<evidence type="ECO:0000255" key="1">
    <source>
        <dbReference type="HAMAP-Rule" id="MF_00087"/>
    </source>
</evidence>
<sequence>MSLLALGINHNTASVALRERVAFGPDCIDRALRELVTQPGVSEAVIVSTCNRTELYCSLEKGQGEQVLHWLQRFHGLDAAEVVSAIYQHQDEEAVRHLMRVACGLDSLVLGEPQILGQIKQSYAHAQQSEAVKGSLERLFQKSFSVAKRVRTDTEIGASAVSVAFAAVSLGRRIFSDLSQTKVLLVGAGETIELVARHLREQNVTRMMVANRTLQRAQLLAEEFGAQVMTLEEIPDYLHEADIVISSTASPLPIIGKGMVERALKARRFKPMFLVDIAVPRDIEAEVDELSDAYLYTVDDLQGIIEQNLETRKRAAAEAEIIVLEERDEFMGWYRSQHSVDLIRDYRHQAQQVADEELQRALLSLQQGENAEQALKAMAHRLTNKLIHAPTQALRQAAAQGDHHQLSRLRQVLGLPQE</sequence>
<accession>A4SK63</accession>
<name>HEM1_AERS4</name>
<feature type="chain" id="PRO_1000004589" description="Glutamyl-tRNA reductase">
    <location>
        <begin position="1"/>
        <end position="418"/>
    </location>
</feature>
<feature type="active site" description="Nucleophile" evidence="1">
    <location>
        <position position="50"/>
    </location>
</feature>
<feature type="binding site" evidence="1">
    <location>
        <begin position="49"/>
        <end position="52"/>
    </location>
    <ligand>
        <name>substrate</name>
    </ligand>
</feature>
<feature type="binding site" evidence="1">
    <location>
        <position position="107"/>
    </location>
    <ligand>
        <name>substrate</name>
    </ligand>
</feature>
<feature type="binding site" evidence="1">
    <location>
        <begin position="112"/>
        <end position="114"/>
    </location>
    <ligand>
        <name>substrate</name>
    </ligand>
</feature>
<feature type="binding site" evidence="1">
    <location>
        <position position="118"/>
    </location>
    <ligand>
        <name>substrate</name>
    </ligand>
</feature>
<feature type="binding site" evidence="1">
    <location>
        <begin position="187"/>
        <end position="192"/>
    </location>
    <ligand>
        <name>NADP(+)</name>
        <dbReference type="ChEBI" id="CHEBI:58349"/>
    </ligand>
</feature>
<feature type="site" description="Important for activity" evidence="1">
    <location>
        <position position="97"/>
    </location>
</feature>
<organism>
    <name type="scientific">Aeromonas salmonicida (strain A449)</name>
    <dbReference type="NCBI Taxonomy" id="382245"/>
    <lineage>
        <taxon>Bacteria</taxon>
        <taxon>Pseudomonadati</taxon>
        <taxon>Pseudomonadota</taxon>
        <taxon>Gammaproteobacteria</taxon>
        <taxon>Aeromonadales</taxon>
        <taxon>Aeromonadaceae</taxon>
        <taxon>Aeromonas</taxon>
    </lineage>
</organism>
<reference key="1">
    <citation type="journal article" date="2008" name="BMC Genomics">
        <title>The genome of Aeromonas salmonicida subsp. salmonicida A449: insights into the evolution of a fish pathogen.</title>
        <authorList>
            <person name="Reith M.E."/>
            <person name="Singh R.K."/>
            <person name="Curtis B."/>
            <person name="Boyd J.M."/>
            <person name="Bouevitch A."/>
            <person name="Kimball J."/>
            <person name="Munholland J."/>
            <person name="Murphy C."/>
            <person name="Sarty D."/>
            <person name="Williams J."/>
            <person name="Nash J.H."/>
            <person name="Johnson S.C."/>
            <person name="Brown L.L."/>
        </authorList>
    </citation>
    <scope>NUCLEOTIDE SEQUENCE [LARGE SCALE GENOMIC DNA]</scope>
    <source>
        <strain>A449</strain>
    </source>
</reference>
<proteinExistence type="inferred from homology"/>
<dbReference type="EC" id="1.2.1.70" evidence="1"/>
<dbReference type="EMBL" id="CP000644">
    <property type="protein sequence ID" value="ABO89285.1"/>
    <property type="molecule type" value="Genomic_DNA"/>
</dbReference>
<dbReference type="RefSeq" id="WP_005317012.1">
    <property type="nucleotide sequence ID" value="NC_009348.1"/>
</dbReference>
<dbReference type="SMR" id="A4SK63"/>
<dbReference type="STRING" id="29491.GCA_000820065_02903"/>
<dbReference type="KEGG" id="asa:ASA_1174"/>
<dbReference type="eggNOG" id="COG0373">
    <property type="taxonomic scope" value="Bacteria"/>
</dbReference>
<dbReference type="HOGENOM" id="CLU_035113_2_2_6"/>
<dbReference type="UniPathway" id="UPA00251">
    <property type="reaction ID" value="UER00316"/>
</dbReference>
<dbReference type="Proteomes" id="UP000000225">
    <property type="component" value="Chromosome"/>
</dbReference>
<dbReference type="GO" id="GO:0008883">
    <property type="term" value="F:glutamyl-tRNA reductase activity"/>
    <property type="evidence" value="ECO:0007669"/>
    <property type="project" value="UniProtKB-UniRule"/>
</dbReference>
<dbReference type="GO" id="GO:0050661">
    <property type="term" value="F:NADP binding"/>
    <property type="evidence" value="ECO:0007669"/>
    <property type="project" value="InterPro"/>
</dbReference>
<dbReference type="GO" id="GO:0019353">
    <property type="term" value="P:protoporphyrinogen IX biosynthetic process from glutamate"/>
    <property type="evidence" value="ECO:0007669"/>
    <property type="project" value="TreeGrafter"/>
</dbReference>
<dbReference type="CDD" id="cd05213">
    <property type="entry name" value="NAD_bind_Glutamyl_tRNA_reduct"/>
    <property type="match status" value="1"/>
</dbReference>
<dbReference type="FunFam" id="3.30.460.30:FF:000001">
    <property type="entry name" value="Glutamyl-tRNA reductase"/>
    <property type="match status" value="1"/>
</dbReference>
<dbReference type="FunFam" id="3.40.50.720:FF:000031">
    <property type="entry name" value="Glutamyl-tRNA reductase"/>
    <property type="match status" value="1"/>
</dbReference>
<dbReference type="Gene3D" id="3.30.460.30">
    <property type="entry name" value="Glutamyl-tRNA reductase, N-terminal domain"/>
    <property type="match status" value="1"/>
</dbReference>
<dbReference type="Gene3D" id="3.40.50.720">
    <property type="entry name" value="NAD(P)-binding Rossmann-like Domain"/>
    <property type="match status" value="1"/>
</dbReference>
<dbReference type="HAMAP" id="MF_00087">
    <property type="entry name" value="Glu_tRNA_reductase"/>
    <property type="match status" value="1"/>
</dbReference>
<dbReference type="InterPro" id="IPR000343">
    <property type="entry name" value="4pyrrol_synth_GluRdtase"/>
</dbReference>
<dbReference type="InterPro" id="IPR015896">
    <property type="entry name" value="4pyrrol_synth_GluRdtase_dimer"/>
</dbReference>
<dbReference type="InterPro" id="IPR015895">
    <property type="entry name" value="4pyrrol_synth_GluRdtase_N"/>
</dbReference>
<dbReference type="InterPro" id="IPR018214">
    <property type="entry name" value="GluRdtase_CS"/>
</dbReference>
<dbReference type="InterPro" id="IPR036453">
    <property type="entry name" value="GluRdtase_dimer_dom_sf"/>
</dbReference>
<dbReference type="InterPro" id="IPR036343">
    <property type="entry name" value="GluRdtase_N_sf"/>
</dbReference>
<dbReference type="InterPro" id="IPR036291">
    <property type="entry name" value="NAD(P)-bd_dom_sf"/>
</dbReference>
<dbReference type="InterPro" id="IPR006151">
    <property type="entry name" value="Shikm_DH/Glu-tRNA_Rdtase"/>
</dbReference>
<dbReference type="NCBIfam" id="TIGR01035">
    <property type="entry name" value="hemA"/>
    <property type="match status" value="1"/>
</dbReference>
<dbReference type="PANTHER" id="PTHR43013">
    <property type="entry name" value="GLUTAMYL-TRNA REDUCTASE"/>
    <property type="match status" value="1"/>
</dbReference>
<dbReference type="PANTHER" id="PTHR43013:SF1">
    <property type="entry name" value="GLUTAMYL-TRNA REDUCTASE"/>
    <property type="match status" value="1"/>
</dbReference>
<dbReference type="Pfam" id="PF00745">
    <property type="entry name" value="GlutR_dimer"/>
    <property type="match status" value="1"/>
</dbReference>
<dbReference type="Pfam" id="PF05201">
    <property type="entry name" value="GlutR_N"/>
    <property type="match status" value="1"/>
</dbReference>
<dbReference type="Pfam" id="PF01488">
    <property type="entry name" value="Shikimate_DH"/>
    <property type="match status" value="1"/>
</dbReference>
<dbReference type="PIRSF" id="PIRSF000445">
    <property type="entry name" value="4pyrrol_synth_GluRdtase"/>
    <property type="match status" value="1"/>
</dbReference>
<dbReference type="SUPFAM" id="SSF69742">
    <property type="entry name" value="Glutamyl tRNA-reductase catalytic, N-terminal domain"/>
    <property type="match status" value="1"/>
</dbReference>
<dbReference type="SUPFAM" id="SSF69075">
    <property type="entry name" value="Glutamyl tRNA-reductase dimerization domain"/>
    <property type="match status" value="1"/>
</dbReference>
<dbReference type="SUPFAM" id="SSF51735">
    <property type="entry name" value="NAD(P)-binding Rossmann-fold domains"/>
    <property type="match status" value="1"/>
</dbReference>
<dbReference type="PROSITE" id="PS00747">
    <property type="entry name" value="GLUTR"/>
    <property type="match status" value="1"/>
</dbReference>
<keyword id="KW-0521">NADP</keyword>
<keyword id="KW-0560">Oxidoreductase</keyword>
<keyword id="KW-0627">Porphyrin biosynthesis</keyword>
<comment type="function">
    <text evidence="1">Catalyzes the NADPH-dependent reduction of glutamyl-tRNA(Glu) to glutamate 1-semialdehyde (GSA).</text>
</comment>
<comment type="catalytic activity">
    <reaction evidence="1">
        <text>(S)-4-amino-5-oxopentanoate + tRNA(Glu) + NADP(+) = L-glutamyl-tRNA(Glu) + NADPH + H(+)</text>
        <dbReference type="Rhea" id="RHEA:12344"/>
        <dbReference type="Rhea" id="RHEA-COMP:9663"/>
        <dbReference type="Rhea" id="RHEA-COMP:9680"/>
        <dbReference type="ChEBI" id="CHEBI:15378"/>
        <dbReference type="ChEBI" id="CHEBI:57501"/>
        <dbReference type="ChEBI" id="CHEBI:57783"/>
        <dbReference type="ChEBI" id="CHEBI:58349"/>
        <dbReference type="ChEBI" id="CHEBI:78442"/>
        <dbReference type="ChEBI" id="CHEBI:78520"/>
        <dbReference type="EC" id="1.2.1.70"/>
    </reaction>
</comment>
<comment type="pathway">
    <text evidence="1">Porphyrin-containing compound metabolism; protoporphyrin-IX biosynthesis; 5-aminolevulinate from L-glutamyl-tRNA(Glu): step 1/2.</text>
</comment>
<comment type="subunit">
    <text evidence="1">Homodimer.</text>
</comment>
<comment type="domain">
    <text evidence="1">Possesses an unusual extended V-shaped dimeric structure with each monomer consisting of three distinct domains arranged along a curved 'spinal' alpha-helix. The N-terminal catalytic domain specifically recognizes the glutamate moiety of the substrate. The second domain is the NADPH-binding domain, and the third C-terminal domain is responsible for dimerization.</text>
</comment>
<comment type="miscellaneous">
    <text evidence="1">During catalysis, the active site Cys acts as a nucleophile attacking the alpha-carbonyl group of tRNA-bound glutamate with the formation of a thioester intermediate between enzyme and glutamate, and the concomitant release of tRNA(Glu). The thioester intermediate is finally reduced by direct hydride transfer from NADPH, to form the product GSA.</text>
</comment>
<comment type="similarity">
    <text evidence="1">Belongs to the glutamyl-tRNA reductase family.</text>
</comment>
<protein>
    <recommendedName>
        <fullName evidence="1">Glutamyl-tRNA reductase</fullName>
        <shortName evidence="1">GluTR</shortName>
        <ecNumber evidence="1">1.2.1.70</ecNumber>
    </recommendedName>
</protein>
<gene>
    <name evidence="1" type="primary">hemA</name>
    <name type="ordered locus">ASA_1174</name>
</gene>